<protein>
    <recommendedName>
        <fullName evidence="1">Small ribosomal subunit protein uS2</fullName>
    </recommendedName>
    <alternativeName>
        <fullName evidence="2">30S ribosomal protein S2</fullName>
    </alternativeName>
</protein>
<dbReference type="EMBL" id="CP000551">
    <property type="protein sequence ID" value="ABM70100.1"/>
    <property type="molecule type" value="Genomic_DNA"/>
</dbReference>
<dbReference type="RefSeq" id="WP_011818259.1">
    <property type="nucleotide sequence ID" value="NC_008816.1"/>
</dbReference>
<dbReference type="SMR" id="A2BQN9"/>
<dbReference type="STRING" id="146891.A9601_08141"/>
<dbReference type="KEGG" id="pmb:A9601_08141"/>
<dbReference type="eggNOG" id="COG0052">
    <property type="taxonomic scope" value="Bacteria"/>
</dbReference>
<dbReference type="HOGENOM" id="CLU_040318_1_2_3"/>
<dbReference type="OrthoDB" id="9808036at2"/>
<dbReference type="Proteomes" id="UP000002590">
    <property type="component" value="Chromosome"/>
</dbReference>
<dbReference type="GO" id="GO:0022627">
    <property type="term" value="C:cytosolic small ribosomal subunit"/>
    <property type="evidence" value="ECO:0007669"/>
    <property type="project" value="TreeGrafter"/>
</dbReference>
<dbReference type="GO" id="GO:0003735">
    <property type="term" value="F:structural constituent of ribosome"/>
    <property type="evidence" value="ECO:0007669"/>
    <property type="project" value="InterPro"/>
</dbReference>
<dbReference type="GO" id="GO:0006412">
    <property type="term" value="P:translation"/>
    <property type="evidence" value="ECO:0007669"/>
    <property type="project" value="UniProtKB-UniRule"/>
</dbReference>
<dbReference type="CDD" id="cd01425">
    <property type="entry name" value="RPS2"/>
    <property type="match status" value="1"/>
</dbReference>
<dbReference type="FunFam" id="1.10.287.610:FF:000001">
    <property type="entry name" value="30S ribosomal protein S2"/>
    <property type="match status" value="1"/>
</dbReference>
<dbReference type="Gene3D" id="3.40.50.10490">
    <property type="entry name" value="Glucose-6-phosphate isomerase like protein, domain 1"/>
    <property type="match status" value="1"/>
</dbReference>
<dbReference type="Gene3D" id="1.10.287.610">
    <property type="entry name" value="Helix hairpin bin"/>
    <property type="match status" value="1"/>
</dbReference>
<dbReference type="HAMAP" id="MF_00291_B">
    <property type="entry name" value="Ribosomal_uS2_B"/>
    <property type="match status" value="1"/>
</dbReference>
<dbReference type="InterPro" id="IPR001865">
    <property type="entry name" value="Ribosomal_uS2"/>
</dbReference>
<dbReference type="InterPro" id="IPR005706">
    <property type="entry name" value="Ribosomal_uS2_bac/mit/plastid"/>
</dbReference>
<dbReference type="InterPro" id="IPR018130">
    <property type="entry name" value="Ribosomal_uS2_CS"/>
</dbReference>
<dbReference type="InterPro" id="IPR023591">
    <property type="entry name" value="Ribosomal_uS2_flav_dom_sf"/>
</dbReference>
<dbReference type="NCBIfam" id="TIGR01011">
    <property type="entry name" value="rpsB_bact"/>
    <property type="match status" value="1"/>
</dbReference>
<dbReference type="PANTHER" id="PTHR12534">
    <property type="entry name" value="30S RIBOSOMAL PROTEIN S2 PROKARYOTIC AND ORGANELLAR"/>
    <property type="match status" value="1"/>
</dbReference>
<dbReference type="PANTHER" id="PTHR12534:SF0">
    <property type="entry name" value="SMALL RIBOSOMAL SUBUNIT PROTEIN US2M"/>
    <property type="match status" value="1"/>
</dbReference>
<dbReference type="Pfam" id="PF00318">
    <property type="entry name" value="Ribosomal_S2"/>
    <property type="match status" value="1"/>
</dbReference>
<dbReference type="PRINTS" id="PR00395">
    <property type="entry name" value="RIBOSOMALS2"/>
</dbReference>
<dbReference type="SUPFAM" id="SSF52313">
    <property type="entry name" value="Ribosomal protein S2"/>
    <property type="match status" value="1"/>
</dbReference>
<dbReference type="PROSITE" id="PS00962">
    <property type="entry name" value="RIBOSOMAL_S2_1"/>
    <property type="match status" value="1"/>
</dbReference>
<sequence length="234" mass="26355">MAVVSLSEMMEAGAHFGHQTRRWNPKMSKYIYCARNGVHIIDLVKTALCMNNAYKWTRNAAKSGKRFLFVGTKKQASDVVAQEATRCGAAYVNQRWLGGMLTNWTTMKARIERLKDLERMESSGSIAMRPKKEAAVLRRELERLQKYLGGLKGMRRLPDVVVLVDQRRESNAVLEARKLDISLVSMLDTNCDPDLCEVPIPCNDDAVRSVQLILGRLADAINEGRKGSNAERKN</sequence>
<name>RS2_PROMS</name>
<keyword id="KW-0687">Ribonucleoprotein</keyword>
<keyword id="KW-0689">Ribosomal protein</keyword>
<organism>
    <name type="scientific">Prochlorococcus marinus (strain AS9601)</name>
    <dbReference type="NCBI Taxonomy" id="146891"/>
    <lineage>
        <taxon>Bacteria</taxon>
        <taxon>Bacillati</taxon>
        <taxon>Cyanobacteriota</taxon>
        <taxon>Cyanophyceae</taxon>
        <taxon>Synechococcales</taxon>
        <taxon>Prochlorococcaceae</taxon>
        <taxon>Prochlorococcus</taxon>
    </lineage>
</organism>
<gene>
    <name evidence="1" type="primary">rpsB</name>
    <name evidence="1" type="synonym">rps2</name>
    <name type="ordered locus">A9601_08141</name>
</gene>
<evidence type="ECO:0000255" key="1">
    <source>
        <dbReference type="HAMAP-Rule" id="MF_00291"/>
    </source>
</evidence>
<evidence type="ECO:0000305" key="2"/>
<proteinExistence type="inferred from homology"/>
<feature type="chain" id="PRO_1000004026" description="Small ribosomal subunit protein uS2">
    <location>
        <begin position="1"/>
        <end position="234"/>
    </location>
</feature>
<comment type="similarity">
    <text evidence="1">Belongs to the universal ribosomal protein uS2 family.</text>
</comment>
<reference key="1">
    <citation type="journal article" date="2007" name="PLoS Genet.">
        <title>Patterns and implications of gene gain and loss in the evolution of Prochlorococcus.</title>
        <authorList>
            <person name="Kettler G.C."/>
            <person name="Martiny A.C."/>
            <person name="Huang K."/>
            <person name="Zucker J."/>
            <person name="Coleman M.L."/>
            <person name="Rodrigue S."/>
            <person name="Chen F."/>
            <person name="Lapidus A."/>
            <person name="Ferriera S."/>
            <person name="Johnson J."/>
            <person name="Steglich C."/>
            <person name="Church G.M."/>
            <person name="Richardson P."/>
            <person name="Chisholm S.W."/>
        </authorList>
    </citation>
    <scope>NUCLEOTIDE SEQUENCE [LARGE SCALE GENOMIC DNA]</scope>
    <source>
        <strain>AS9601</strain>
    </source>
</reference>
<accession>A2BQN9</accession>